<comment type="function">
    <text evidence="1">Catalyzes the rearrangement of 1-deoxy-D-xylulose 5-phosphate (DXP) to produce the thiazole phosphate moiety of thiamine. Sulfur is provided by the thiocarboxylate moiety of the carrier protein ThiS. In vitro, sulfur can be provided by H(2)S.</text>
</comment>
<comment type="catalytic activity">
    <reaction evidence="1">
        <text>[ThiS sulfur-carrier protein]-C-terminal-Gly-aminoethanethioate + 2-iminoacetate + 1-deoxy-D-xylulose 5-phosphate = [ThiS sulfur-carrier protein]-C-terminal Gly-Gly + 2-[(2R,5Z)-2-carboxy-4-methylthiazol-5(2H)-ylidene]ethyl phosphate + 2 H2O + H(+)</text>
        <dbReference type="Rhea" id="RHEA:26297"/>
        <dbReference type="Rhea" id="RHEA-COMP:12909"/>
        <dbReference type="Rhea" id="RHEA-COMP:19908"/>
        <dbReference type="ChEBI" id="CHEBI:15377"/>
        <dbReference type="ChEBI" id="CHEBI:15378"/>
        <dbReference type="ChEBI" id="CHEBI:57792"/>
        <dbReference type="ChEBI" id="CHEBI:62899"/>
        <dbReference type="ChEBI" id="CHEBI:77846"/>
        <dbReference type="ChEBI" id="CHEBI:90778"/>
        <dbReference type="ChEBI" id="CHEBI:232372"/>
        <dbReference type="EC" id="2.8.1.10"/>
    </reaction>
</comment>
<comment type="pathway">
    <text evidence="1">Cofactor biosynthesis; thiamine diphosphate biosynthesis.</text>
</comment>
<comment type="subunit">
    <text evidence="1">Homotetramer. Forms heterodimers with either ThiH or ThiS.</text>
</comment>
<comment type="subcellular location">
    <subcellularLocation>
        <location evidence="1">Cytoplasm</location>
    </subcellularLocation>
</comment>
<comment type="similarity">
    <text evidence="1">Belongs to the ThiG family.</text>
</comment>
<reference key="1">
    <citation type="journal article" date="2002" name="Proc. Natl. Acad. Sci. U.S.A.">
        <title>The Brucella suis genome reveals fundamental similarities between animal and plant pathogens and symbionts.</title>
        <authorList>
            <person name="Paulsen I.T."/>
            <person name="Seshadri R."/>
            <person name="Nelson K.E."/>
            <person name="Eisen J.A."/>
            <person name="Heidelberg J.F."/>
            <person name="Read T.D."/>
            <person name="Dodson R.J."/>
            <person name="Umayam L.A."/>
            <person name="Brinkac L.M."/>
            <person name="Beanan M.J."/>
            <person name="Daugherty S.C."/>
            <person name="DeBoy R.T."/>
            <person name="Durkin A.S."/>
            <person name="Kolonay J.F."/>
            <person name="Madupu R."/>
            <person name="Nelson W.C."/>
            <person name="Ayodeji B."/>
            <person name="Kraul M."/>
            <person name="Shetty J."/>
            <person name="Malek J.A."/>
            <person name="Van Aken S.E."/>
            <person name="Riedmuller S."/>
            <person name="Tettelin H."/>
            <person name="Gill S.R."/>
            <person name="White O."/>
            <person name="Salzberg S.L."/>
            <person name="Hoover D.L."/>
            <person name="Lindler L.E."/>
            <person name="Halling S.M."/>
            <person name="Boyle S.M."/>
            <person name="Fraser C.M."/>
        </authorList>
    </citation>
    <scope>NUCLEOTIDE SEQUENCE [LARGE SCALE GENOMIC DNA]</scope>
    <source>
        <strain>1330</strain>
    </source>
</reference>
<reference key="2">
    <citation type="journal article" date="2011" name="J. Bacteriol.">
        <title>Revised genome sequence of Brucella suis 1330.</title>
        <authorList>
            <person name="Tae H."/>
            <person name="Shallom S."/>
            <person name="Settlage R."/>
            <person name="Preston D."/>
            <person name="Adams L.G."/>
            <person name="Garner H.R."/>
        </authorList>
    </citation>
    <scope>NUCLEOTIDE SEQUENCE [LARGE SCALE GENOMIC DNA]</scope>
    <source>
        <strain>1330</strain>
    </source>
</reference>
<accession>Q8G2U9</accession>
<accession>G0KBR3</accession>
<proteinExistence type="inferred from homology"/>
<feature type="chain" id="PRO_0000162798" description="Thiazole synthase">
    <location>
        <begin position="1"/>
        <end position="256"/>
    </location>
</feature>
<feature type="active site" description="Schiff-base intermediate with DXP" evidence="1">
    <location>
        <position position="96"/>
    </location>
</feature>
<feature type="binding site" evidence="1">
    <location>
        <position position="157"/>
    </location>
    <ligand>
        <name>1-deoxy-D-xylulose 5-phosphate</name>
        <dbReference type="ChEBI" id="CHEBI:57792"/>
    </ligand>
</feature>
<feature type="binding site" evidence="1">
    <location>
        <begin position="184"/>
        <end position="185"/>
    </location>
    <ligand>
        <name>1-deoxy-D-xylulose 5-phosphate</name>
        <dbReference type="ChEBI" id="CHEBI:57792"/>
    </ligand>
</feature>
<feature type="binding site" evidence="1">
    <location>
        <begin position="206"/>
        <end position="207"/>
    </location>
    <ligand>
        <name>1-deoxy-D-xylulose 5-phosphate</name>
        <dbReference type="ChEBI" id="CHEBI:57792"/>
    </ligand>
</feature>
<evidence type="ECO:0000255" key="1">
    <source>
        <dbReference type="HAMAP-Rule" id="MF_00443"/>
    </source>
</evidence>
<dbReference type="EC" id="2.8.1.10" evidence="1"/>
<dbReference type="EMBL" id="AE014291">
    <property type="protein sequence ID" value="AAN29164.1"/>
    <property type="molecule type" value="Genomic_DNA"/>
</dbReference>
<dbReference type="EMBL" id="CP002997">
    <property type="protein sequence ID" value="AEM17576.1"/>
    <property type="molecule type" value="Genomic_DNA"/>
</dbReference>
<dbReference type="RefSeq" id="WP_004691411.1">
    <property type="nucleotide sequence ID" value="NZ_KN046804.1"/>
</dbReference>
<dbReference type="SMR" id="Q8G2U9"/>
<dbReference type="KEGG" id="bms:BR0215"/>
<dbReference type="KEGG" id="bsi:BS1330_I0215"/>
<dbReference type="PATRIC" id="fig|204722.21.peg.997"/>
<dbReference type="HOGENOM" id="CLU_062233_1_0_5"/>
<dbReference type="PhylomeDB" id="Q8G2U9"/>
<dbReference type="UniPathway" id="UPA00060"/>
<dbReference type="Proteomes" id="UP000007104">
    <property type="component" value="Chromosome I"/>
</dbReference>
<dbReference type="GO" id="GO:0005737">
    <property type="term" value="C:cytoplasm"/>
    <property type="evidence" value="ECO:0007669"/>
    <property type="project" value="UniProtKB-SubCell"/>
</dbReference>
<dbReference type="GO" id="GO:1990107">
    <property type="term" value="F:thiazole synthase activity"/>
    <property type="evidence" value="ECO:0007669"/>
    <property type="project" value="UniProtKB-EC"/>
</dbReference>
<dbReference type="GO" id="GO:0009229">
    <property type="term" value="P:thiamine diphosphate biosynthetic process"/>
    <property type="evidence" value="ECO:0007669"/>
    <property type="project" value="UniProtKB-UniRule"/>
</dbReference>
<dbReference type="CDD" id="cd04728">
    <property type="entry name" value="ThiG"/>
    <property type="match status" value="1"/>
</dbReference>
<dbReference type="Gene3D" id="3.20.20.70">
    <property type="entry name" value="Aldolase class I"/>
    <property type="match status" value="1"/>
</dbReference>
<dbReference type="HAMAP" id="MF_00443">
    <property type="entry name" value="ThiG"/>
    <property type="match status" value="1"/>
</dbReference>
<dbReference type="InterPro" id="IPR013785">
    <property type="entry name" value="Aldolase_TIM"/>
</dbReference>
<dbReference type="InterPro" id="IPR033983">
    <property type="entry name" value="Thiazole_synthase_ThiG"/>
</dbReference>
<dbReference type="InterPro" id="IPR008867">
    <property type="entry name" value="ThiG"/>
</dbReference>
<dbReference type="PANTHER" id="PTHR34266">
    <property type="entry name" value="THIAZOLE SYNTHASE"/>
    <property type="match status" value="1"/>
</dbReference>
<dbReference type="PANTHER" id="PTHR34266:SF2">
    <property type="entry name" value="THIAZOLE SYNTHASE"/>
    <property type="match status" value="1"/>
</dbReference>
<dbReference type="Pfam" id="PF05690">
    <property type="entry name" value="ThiG"/>
    <property type="match status" value="1"/>
</dbReference>
<dbReference type="SUPFAM" id="SSF110399">
    <property type="entry name" value="ThiG-like"/>
    <property type="match status" value="1"/>
</dbReference>
<sequence length="256" mass="27351">MLEFYGKRFESRLLLGTAQYPSPSILADAVRASLSRIVTVSLRRESGEARAGQDFWALIKALGVAVLPNTAGCHTPREAITTAHMAREVFGTNWIKLEVIGDTDTLQPDPFGLVEAARILCDESFEVFPYMNDDLIVAERLIEAGCKVLMPWGAPIGSGRGLNNPYALKTMRAHFPDIPLVVDAGIGVPSHAAAAMELGFDAVLINTAVAKAGDPAAMARAFALAVEAGRLAYEADPIEARDMASPSTPLLGKAFL</sequence>
<gene>
    <name evidence="1" type="primary">thiG</name>
    <name type="ordered locus">BR0215</name>
    <name type="ordered locus">BS1330_I0215</name>
</gene>
<protein>
    <recommendedName>
        <fullName evidence="1">Thiazole synthase</fullName>
        <ecNumber evidence="1">2.8.1.10</ecNumber>
    </recommendedName>
</protein>
<organism>
    <name type="scientific">Brucella suis biovar 1 (strain 1330)</name>
    <dbReference type="NCBI Taxonomy" id="204722"/>
    <lineage>
        <taxon>Bacteria</taxon>
        <taxon>Pseudomonadati</taxon>
        <taxon>Pseudomonadota</taxon>
        <taxon>Alphaproteobacteria</taxon>
        <taxon>Hyphomicrobiales</taxon>
        <taxon>Brucellaceae</taxon>
        <taxon>Brucella/Ochrobactrum group</taxon>
        <taxon>Brucella</taxon>
    </lineage>
</organism>
<name>THIG_BRUSU</name>
<keyword id="KW-0963">Cytoplasm</keyword>
<keyword id="KW-0704">Schiff base</keyword>
<keyword id="KW-0784">Thiamine biosynthesis</keyword>
<keyword id="KW-0808">Transferase</keyword>